<sequence>MLKNPFIKDSGLNQYQPLINQINALETNLKTLTDTELRNKTFELKKRYQEEQDLNALTAEAFAITREASFRTLGLRHFDVQLIGGLVLNSGKISEMRTGEGKTLVATLPAYLNALTDKGVHIVTVNDYLASRDQISMGQIYRFLGLDTGLIQEDMAFLERQQNYKAEITYVTNNEVAFDYLRDNMASNLSQVVLPPFNYCIVDEVDSIFIDEAQVPLIISQAVETCIDKYIVAAEVAEYLEVNVHFKVDEKNRNIILTEQGTAQIEKILQVEDLYNPNDPWIPYILSAIKATALFFRNVHYIVQNNQIIIVDEFTGRIMPDRRWNEGLHQAVEAKEGVPIRQNTETAASITYQNFFLLYPKLSGMTGTAKTSEVEFEKIYNLPVEEIPTARPNLRKDLPDFVYKDSLTKWTAIARECKSIANTKQPILIGTTTVENSEMLADLLQEYQLSYRLLNAKPENVKRESEIVAQAGEIGSITIATNMAGRGTDIILGGNTTFKVRKQLYNILVSYKSKTNLTKLNTIFPLAIDIKFTSQKFLSVLNSLLNDPKFLSLSSTGILKFLNEIDQIRIPKITYQCSIKFLLNELSKFEKKNQTIDNKIVKNLGGLYIIGTERNNSRRIDNQLRGRCGRQGDPGTSRFFLSLEDSLFRNFGSSKLQNFMQNQLLDDLPLESNLLTKSLDAAQKRVEERDYDGRKYLFDYDDILNKQRNIVYYERRKLLESQSLRETILAYGEQVIKDIITLLKDPKFPKTNSMIEELFKTRLVSLNSDLNSLDSFELKTYLFQEFWLSYETKVLEFEICQTGLIRSFERTIILYYTDIAWKEHLQKIALLRDAVGWRSYGQRNPLFEFKEEAYNLFQNRNITIRHLLIRDFLHSFIL</sequence>
<protein>
    <recommendedName>
        <fullName evidence="1">Protein translocase subunit SecA</fullName>
        <ecNumber evidence="1">7.4.2.8</ecNumber>
    </recommendedName>
</protein>
<comment type="function">
    <text evidence="1">Has a central role in coupling the hydrolysis of ATP to the transfer of proteins across the thylakoid membrane.</text>
</comment>
<comment type="catalytic activity">
    <reaction evidence="1">
        <text>ATP + H2O + cellular proteinSide 1 = ADP + phosphate + cellular proteinSide 2.</text>
        <dbReference type="EC" id="7.4.2.8"/>
    </reaction>
</comment>
<comment type="subcellular location">
    <subcellularLocation>
        <location evidence="1">Plastid</location>
        <location evidence="1">Chloroplast stroma</location>
    </subcellularLocation>
    <subcellularLocation>
        <location evidence="1">Plastid</location>
        <location evidence="1">Chloroplast thylakoid membrane</location>
        <topology evidence="1">Peripheral membrane protein</topology>
    </subcellularLocation>
    <text evidence="1">A minor fraction is associated with the chloroplast thylakoid membrane.</text>
</comment>
<comment type="similarity">
    <text evidence="1">Belongs to the SecA family.</text>
</comment>
<feature type="chain" id="PRO_0000318489" description="Protein translocase subunit SecA">
    <location>
        <begin position="1"/>
        <end position="878"/>
    </location>
</feature>
<feature type="binding site" evidence="1">
    <location>
        <position position="81"/>
    </location>
    <ligand>
        <name>ATP</name>
        <dbReference type="ChEBI" id="CHEBI:30616"/>
    </ligand>
</feature>
<feature type="binding site" evidence="1">
    <location>
        <begin position="99"/>
        <end position="103"/>
    </location>
    <ligand>
        <name>ATP</name>
        <dbReference type="ChEBI" id="CHEBI:30616"/>
    </ligand>
</feature>
<feature type="binding site" evidence="1">
    <location>
        <position position="489"/>
    </location>
    <ligand>
        <name>ATP</name>
        <dbReference type="ChEBI" id="CHEBI:30616"/>
    </ligand>
</feature>
<accession>A0T0V8</accession>
<gene>
    <name evidence="1" type="primary">secA</name>
</gene>
<proteinExistence type="inferred from homology"/>
<reference key="1">
    <citation type="journal article" date="2007" name="Mol. Genet. Genomics">
        <title>Chloroplast genomes of the diatoms Phaeodactylum tricornutum and Thalassiosira pseudonana: comparison with other plastid genomes of the red lineage.</title>
        <authorList>
            <person name="Oudot-Le Secq M.-P."/>
            <person name="Grimwood J."/>
            <person name="Shapiro H."/>
            <person name="Armbrust E.V."/>
            <person name="Bowler C."/>
            <person name="Green B.R."/>
        </authorList>
    </citation>
    <scope>NUCLEOTIDE SEQUENCE [LARGE SCALE GENOMIC DNA]</scope>
    <source>
        <strain>CCMP1335 / NEPCC58 / CCAP 1085/12</strain>
    </source>
</reference>
<geneLocation type="chloroplast"/>
<evidence type="ECO:0000255" key="1">
    <source>
        <dbReference type="HAMAP-Rule" id="MF_01382"/>
    </source>
</evidence>
<organism>
    <name type="scientific">Thalassiosira pseudonana</name>
    <name type="common">Marine diatom</name>
    <name type="synonym">Cyclotella nana</name>
    <dbReference type="NCBI Taxonomy" id="35128"/>
    <lineage>
        <taxon>Eukaryota</taxon>
        <taxon>Sar</taxon>
        <taxon>Stramenopiles</taxon>
        <taxon>Ochrophyta</taxon>
        <taxon>Bacillariophyta</taxon>
        <taxon>Coscinodiscophyceae</taxon>
        <taxon>Thalassiosirophycidae</taxon>
        <taxon>Thalassiosirales</taxon>
        <taxon>Thalassiosiraceae</taxon>
        <taxon>Thalassiosira</taxon>
    </lineage>
</organism>
<name>SECA_THAPS</name>
<keyword id="KW-0067">ATP-binding</keyword>
<keyword id="KW-0150">Chloroplast</keyword>
<keyword id="KW-0472">Membrane</keyword>
<keyword id="KW-0547">Nucleotide-binding</keyword>
<keyword id="KW-0934">Plastid</keyword>
<keyword id="KW-0653">Protein transport</keyword>
<keyword id="KW-0793">Thylakoid</keyword>
<keyword id="KW-1278">Translocase</keyword>
<keyword id="KW-0811">Translocation</keyword>
<keyword id="KW-0813">Transport</keyword>
<dbReference type="EC" id="7.4.2.8" evidence="1"/>
<dbReference type="EMBL" id="EF067921">
    <property type="protein sequence ID" value="ABK20793.1"/>
    <property type="molecule type" value="Genomic_DNA"/>
</dbReference>
<dbReference type="EMBL" id="EF067921">
    <property type="protein sequence ID" value="ABK20847.1"/>
    <property type="molecule type" value="Genomic_DNA"/>
</dbReference>
<dbReference type="RefSeq" id="YP_874570.1">
    <property type="nucleotide sequence ID" value="NC_008589.1"/>
</dbReference>
<dbReference type="RefSeq" id="YP_874624.1">
    <property type="nucleotide sequence ID" value="NC_008589.1"/>
</dbReference>
<dbReference type="SMR" id="A0T0V8"/>
<dbReference type="STRING" id="35128.A0T0V8"/>
<dbReference type="GeneID" id="4524826"/>
<dbReference type="GeneID" id="4524887"/>
<dbReference type="InParanoid" id="A0T0V8"/>
<dbReference type="GO" id="GO:0009570">
    <property type="term" value="C:chloroplast stroma"/>
    <property type="evidence" value="ECO:0007669"/>
    <property type="project" value="UniProtKB-SubCell"/>
</dbReference>
<dbReference type="GO" id="GO:0009535">
    <property type="term" value="C:chloroplast thylakoid membrane"/>
    <property type="evidence" value="ECO:0007669"/>
    <property type="project" value="UniProtKB-SubCell"/>
</dbReference>
<dbReference type="GO" id="GO:0005524">
    <property type="term" value="F:ATP binding"/>
    <property type="evidence" value="ECO:0000318"/>
    <property type="project" value="GO_Central"/>
</dbReference>
<dbReference type="GO" id="GO:0008564">
    <property type="term" value="F:protein-exporting ATPase activity"/>
    <property type="evidence" value="ECO:0007669"/>
    <property type="project" value="UniProtKB-EC"/>
</dbReference>
<dbReference type="GO" id="GO:0065002">
    <property type="term" value="P:intracellular protein transmembrane transport"/>
    <property type="evidence" value="ECO:0007669"/>
    <property type="project" value="UniProtKB-UniRule"/>
</dbReference>
<dbReference type="GO" id="GO:0017038">
    <property type="term" value="P:protein import"/>
    <property type="evidence" value="ECO:0007669"/>
    <property type="project" value="InterPro"/>
</dbReference>
<dbReference type="GO" id="GO:0006605">
    <property type="term" value="P:protein targeting"/>
    <property type="evidence" value="ECO:0007669"/>
    <property type="project" value="UniProtKB-UniRule"/>
</dbReference>
<dbReference type="CDD" id="cd17928">
    <property type="entry name" value="DEXDc_SecA"/>
    <property type="match status" value="1"/>
</dbReference>
<dbReference type="CDD" id="cd18803">
    <property type="entry name" value="SF2_C_secA"/>
    <property type="match status" value="1"/>
</dbReference>
<dbReference type="FunFam" id="3.90.1440.10:FF:000003">
    <property type="entry name" value="Preprotein translocase SecA subunit"/>
    <property type="match status" value="1"/>
</dbReference>
<dbReference type="Gene3D" id="1.10.3060.10">
    <property type="entry name" value="Helical scaffold and wing domains of SecA"/>
    <property type="match status" value="1"/>
</dbReference>
<dbReference type="Gene3D" id="3.40.50.300">
    <property type="entry name" value="P-loop containing nucleotide triphosphate hydrolases"/>
    <property type="match status" value="2"/>
</dbReference>
<dbReference type="Gene3D" id="3.90.1440.10">
    <property type="entry name" value="SecA, preprotein cross-linking domain"/>
    <property type="match status" value="1"/>
</dbReference>
<dbReference type="HAMAP" id="MF_01382">
    <property type="entry name" value="SecA"/>
    <property type="match status" value="1"/>
</dbReference>
<dbReference type="InterPro" id="IPR014001">
    <property type="entry name" value="Helicase_ATP-bd"/>
</dbReference>
<dbReference type="InterPro" id="IPR027417">
    <property type="entry name" value="P-loop_NTPase"/>
</dbReference>
<dbReference type="InterPro" id="IPR000185">
    <property type="entry name" value="SecA"/>
</dbReference>
<dbReference type="InterPro" id="IPR020937">
    <property type="entry name" value="SecA_CS"/>
</dbReference>
<dbReference type="InterPro" id="IPR011115">
    <property type="entry name" value="SecA_DEAD"/>
</dbReference>
<dbReference type="InterPro" id="IPR014018">
    <property type="entry name" value="SecA_motor_DEAD"/>
</dbReference>
<dbReference type="InterPro" id="IPR011130">
    <property type="entry name" value="SecA_preprotein_X-link_dom"/>
</dbReference>
<dbReference type="InterPro" id="IPR044722">
    <property type="entry name" value="SecA_SF2_C"/>
</dbReference>
<dbReference type="InterPro" id="IPR011116">
    <property type="entry name" value="SecA_Wing/Scaffold"/>
</dbReference>
<dbReference type="InterPro" id="IPR036266">
    <property type="entry name" value="SecA_Wing/Scaffold_sf"/>
</dbReference>
<dbReference type="InterPro" id="IPR036670">
    <property type="entry name" value="SecA_X-link_sf"/>
</dbReference>
<dbReference type="NCBIfam" id="TIGR00963">
    <property type="entry name" value="secA"/>
    <property type="match status" value="1"/>
</dbReference>
<dbReference type="PANTHER" id="PTHR30612:SF0">
    <property type="entry name" value="CHLOROPLAST PROTEIN-TRANSPORTING ATPASE"/>
    <property type="match status" value="1"/>
</dbReference>
<dbReference type="PANTHER" id="PTHR30612">
    <property type="entry name" value="SECA INNER MEMBRANE COMPONENT OF SEC PROTEIN SECRETION SYSTEM"/>
    <property type="match status" value="1"/>
</dbReference>
<dbReference type="Pfam" id="PF21090">
    <property type="entry name" value="P-loop_SecA"/>
    <property type="match status" value="1"/>
</dbReference>
<dbReference type="Pfam" id="PF07517">
    <property type="entry name" value="SecA_DEAD"/>
    <property type="match status" value="1"/>
</dbReference>
<dbReference type="Pfam" id="PF01043">
    <property type="entry name" value="SecA_PP_bind"/>
    <property type="match status" value="1"/>
</dbReference>
<dbReference type="Pfam" id="PF07516">
    <property type="entry name" value="SecA_SW"/>
    <property type="match status" value="1"/>
</dbReference>
<dbReference type="PRINTS" id="PR00906">
    <property type="entry name" value="SECA"/>
</dbReference>
<dbReference type="SMART" id="SM00957">
    <property type="entry name" value="SecA_DEAD"/>
    <property type="match status" value="1"/>
</dbReference>
<dbReference type="SMART" id="SM00958">
    <property type="entry name" value="SecA_PP_bind"/>
    <property type="match status" value="1"/>
</dbReference>
<dbReference type="SUPFAM" id="SSF81886">
    <property type="entry name" value="Helical scaffold and wing domains of SecA"/>
    <property type="match status" value="1"/>
</dbReference>
<dbReference type="SUPFAM" id="SSF52540">
    <property type="entry name" value="P-loop containing nucleoside triphosphate hydrolases"/>
    <property type="match status" value="2"/>
</dbReference>
<dbReference type="SUPFAM" id="SSF81767">
    <property type="entry name" value="Pre-protein crosslinking domain of SecA"/>
    <property type="match status" value="1"/>
</dbReference>
<dbReference type="PROSITE" id="PS01312">
    <property type="entry name" value="SECA"/>
    <property type="match status" value="1"/>
</dbReference>
<dbReference type="PROSITE" id="PS51196">
    <property type="entry name" value="SECA_MOTOR_DEAD"/>
    <property type="match status" value="1"/>
</dbReference>